<name>HIS4_DESOH</name>
<reference key="1">
    <citation type="submission" date="2007-10" db="EMBL/GenBank/DDBJ databases">
        <title>Complete sequence of Desulfococcus oleovorans Hxd3.</title>
        <authorList>
            <consortium name="US DOE Joint Genome Institute"/>
            <person name="Copeland A."/>
            <person name="Lucas S."/>
            <person name="Lapidus A."/>
            <person name="Barry K."/>
            <person name="Glavina del Rio T."/>
            <person name="Dalin E."/>
            <person name="Tice H."/>
            <person name="Pitluck S."/>
            <person name="Kiss H."/>
            <person name="Brettin T."/>
            <person name="Bruce D."/>
            <person name="Detter J.C."/>
            <person name="Han C."/>
            <person name="Schmutz J."/>
            <person name="Larimer F."/>
            <person name="Land M."/>
            <person name="Hauser L."/>
            <person name="Kyrpides N."/>
            <person name="Kim E."/>
            <person name="Wawrik B."/>
            <person name="Richardson P."/>
        </authorList>
    </citation>
    <scope>NUCLEOTIDE SEQUENCE [LARGE SCALE GENOMIC DNA]</scope>
    <source>
        <strain>DSM 6200 / JCM 39069 / Hxd3</strain>
    </source>
</reference>
<evidence type="ECO:0000255" key="1">
    <source>
        <dbReference type="HAMAP-Rule" id="MF_01014"/>
    </source>
</evidence>
<gene>
    <name evidence="1" type="primary">hisA</name>
    <name type="ordered locus">Dole_2154</name>
</gene>
<feature type="chain" id="PRO_1000135104" description="1-(5-phosphoribosyl)-5-[(5-phosphoribosylamino)methylideneamino] imidazole-4-carboxamide isomerase">
    <location>
        <begin position="1"/>
        <end position="251"/>
    </location>
</feature>
<feature type="active site" description="Proton acceptor" evidence="1">
    <location>
        <position position="8"/>
    </location>
</feature>
<feature type="active site" description="Proton donor" evidence="1">
    <location>
        <position position="129"/>
    </location>
</feature>
<accession>A8ZUC6</accession>
<comment type="catalytic activity">
    <reaction evidence="1">
        <text>1-(5-phospho-beta-D-ribosyl)-5-[(5-phospho-beta-D-ribosylamino)methylideneamino]imidazole-4-carboxamide = 5-[(5-phospho-1-deoxy-D-ribulos-1-ylimino)methylamino]-1-(5-phospho-beta-D-ribosyl)imidazole-4-carboxamide</text>
        <dbReference type="Rhea" id="RHEA:15469"/>
        <dbReference type="ChEBI" id="CHEBI:58435"/>
        <dbReference type="ChEBI" id="CHEBI:58525"/>
        <dbReference type="EC" id="5.3.1.16"/>
    </reaction>
</comment>
<comment type="pathway">
    <text evidence="1">Amino-acid biosynthesis; L-histidine biosynthesis; L-histidine from 5-phospho-alpha-D-ribose 1-diphosphate: step 4/9.</text>
</comment>
<comment type="subcellular location">
    <subcellularLocation>
        <location evidence="1">Cytoplasm</location>
    </subcellularLocation>
</comment>
<comment type="similarity">
    <text evidence="1">Belongs to the HisA/HisF family.</text>
</comment>
<sequence>MMVIPAVDIKGGKCVRLLQGDMNAETVFSDDPGAMAERWAEAGAELIHVVDLDGAIEKSPRNLKAISALIRRVGVPVQVGGGIREIDTVKMYADLGVARIVIGSAAVNHPDLVTAACREFPGRIVLGIDARDGRVATEGWTSTTDIAAADLAARFEGCGVAAINFTDIHRDGMRTGPNIPAIEAFARATAIPVVASGGVSTIDDIQALLGIQEFGVTGVITGRALYDGTLDLAEAIAVASAGDSTSQKSVG</sequence>
<protein>
    <recommendedName>
        <fullName evidence="1">1-(5-phosphoribosyl)-5-[(5-phosphoribosylamino)methylideneamino] imidazole-4-carboxamide isomerase</fullName>
        <ecNumber evidence="1">5.3.1.16</ecNumber>
    </recommendedName>
    <alternativeName>
        <fullName evidence="1">Phosphoribosylformimino-5-aminoimidazole carboxamide ribotide isomerase</fullName>
    </alternativeName>
</protein>
<proteinExistence type="inferred from homology"/>
<organism>
    <name type="scientific">Desulfosudis oleivorans (strain DSM 6200 / JCM 39069 / Hxd3)</name>
    <name type="common">Desulfococcus oleovorans</name>
    <dbReference type="NCBI Taxonomy" id="96561"/>
    <lineage>
        <taxon>Bacteria</taxon>
        <taxon>Pseudomonadati</taxon>
        <taxon>Thermodesulfobacteriota</taxon>
        <taxon>Desulfobacteria</taxon>
        <taxon>Desulfobacterales</taxon>
        <taxon>Desulfosudaceae</taxon>
        <taxon>Desulfosudis</taxon>
    </lineage>
</organism>
<keyword id="KW-0028">Amino-acid biosynthesis</keyword>
<keyword id="KW-0963">Cytoplasm</keyword>
<keyword id="KW-0368">Histidine biosynthesis</keyword>
<keyword id="KW-0413">Isomerase</keyword>
<keyword id="KW-1185">Reference proteome</keyword>
<dbReference type="EC" id="5.3.1.16" evidence="1"/>
<dbReference type="EMBL" id="CP000859">
    <property type="protein sequence ID" value="ABW67958.1"/>
    <property type="molecule type" value="Genomic_DNA"/>
</dbReference>
<dbReference type="RefSeq" id="WP_012175570.1">
    <property type="nucleotide sequence ID" value="NC_009943.1"/>
</dbReference>
<dbReference type="SMR" id="A8ZUC6"/>
<dbReference type="STRING" id="96561.Dole_2154"/>
<dbReference type="KEGG" id="dol:Dole_2154"/>
<dbReference type="eggNOG" id="COG0106">
    <property type="taxonomic scope" value="Bacteria"/>
</dbReference>
<dbReference type="HOGENOM" id="CLU_048577_1_1_7"/>
<dbReference type="OrthoDB" id="9807749at2"/>
<dbReference type="UniPathway" id="UPA00031">
    <property type="reaction ID" value="UER00009"/>
</dbReference>
<dbReference type="Proteomes" id="UP000008561">
    <property type="component" value="Chromosome"/>
</dbReference>
<dbReference type="GO" id="GO:0005737">
    <property type="term" value="C:cytoplasm"/>
    <property type="evidence" value="ECO:0007669"/>
    <property type="project" value="UniProtKB-SubCell"/>
</dbReference>
<dbReference type="GO" id="GO:0003949">
    <property type="term" value="F:1-(5-phosphoribosyl)-5-[(5-phosphoribosylamino)methylideneamino]imidazole-4-carboxamide isomerase activity"/>
    <property type="evidence" value="ECO:0007669"/>
    <property type="project" value="UniProtKB-UniRule"/>
</dbReference>
<dbReference type="GO" id="GO:0000105">
    <property type="term" value="P:L-histidine biosynthetic process"/>
    <property type="evidence" value="ECO:0007669"/>
    <property type="project" value="UniProtKB-UniRule"/>
</dbReference>
<dbReference type="GO" id="GO:0000162">
    <property type="term" value="P:L-tryptophan biosynthetic process"/>
    <property type="evidence" value="ECO:0007669"/>
    <property type="project" value="TreeGrafter"/>
</dbReference>
<dbReference type="CDD" id="cd04732">
    <property type="entry name" value="HisA"/>
    <property type="match status" value="1"/>
</dbReference>
<dbReference type="FunFam" id="3.20.20.70:FF:000009">
    <property type="entry name" value="1-(5-phosphoribosyl)-5-[(5-phosphoribosylamino)methylideneamino] imidazole-4-carboxamide isomerase"/>
    <property type="match status" value="1"/>
</dbReference>
<dbReference type="Gene3D" id="3.20.20.70">
    <property type="entry name" value="Aldolase class I"/>
    <property type="match status" value="1"/>
</dbReference>
<dbReference type="HAMAP" id="MF_01014">
    <property type="entry name" value="HisA"/>
    <property type="match status" value="1"/>
</dbReference>
<dbReference type="InterPro" id="IPR013785">
    <property type="entry name" value="Aldolase_TIM"/>
</dbReference>
<dbReference type="InterPro" id="IPR006062">
    <property type="entry name" value="His_biosynth"/>
</dbReference>
<dbReference type="InterPro" id="IPR006063">
    <property type="entry name" value="HisA_bact_arch"/>
</dbReference>
<dbReference type="InterPro" id="IPR044524">
    <property type="entry name" value="Isoase_HisA-like"/>
</dbReference>
<dbReference type="InterPro" id="IPR023016">
    <property type="entry name" value="Isoase_HisA-like_bact"/>
</dbReference>
<dbReference type="InterPro" id="IPR011060">
    <property type="entry name" value="RibuloseP-bd_barrel"/>
</dbReference>
<dbReference type="NCBIfam" id="TIGR00007">
    <property type="entry name" value="1-(5-phosphoribosyl)-5-[(5-phosphoribosylamino)methylideneamino]imidazole-4-carboxamide isomerase"/>
    <property type="match status" value="1"/>
</dbReference>
<dbReference type="NCBIfam" id="NF010112">
    <property type="entry name" value="PRK13585.1"/>
    <property type="match status" value="1"/>
</dbReference>
<dbReference type="PANTHER" id="PTHR43090">
    <property type="entry name" value="1-(5-PHOSPHORIBOSYL)-5-[(5-PHOSPHORIBOSYLAMINO)METHYLIDENEAMINO] IMIDAZOLE-4-CARBOXAMIDE ISOMERASE"/>
    <property type="match status" value="1"/>
</dbReference>
<dbReference type="PANTHER" id="PTHR43090:SF2">
    <property type="entry name" value="1-(5-PHOSPHORIBOSYL)-5-[(5-PHOSPHORIBOSYLAMINO)METHYLIDENEAMINO] IMIDAZOLE-4-CARBOXAMIDE ISOMERASE"/>
    <property type="match status" value="1"/>
</dbReference>
<dbReference type="Pfam" id="PF00977">
    <property type="entry name" value="His_biosynth"/>
    <property type="match status" value="1"/>
</dbReference>
<dbReference type="SUPFAM" id="SSF51366">
    <property type="entry name" value="Ribulose-phoshate binding barrel"/>
    <property type="match status" value="1"/>
</dbReference>